<dbReference type="EMBL" id="CP000454">
    <property type="protein sequence ID" value="ABK03990.1"/>
    <property type="molecule type" value="Genomic_DNA"/>
</dbReference>
<dbReference type="RefSeq" id="WP_011692452.1">
    <property type="nucleotide sequence ID" value="NC_008541.1"/>
</dbReference>
<dbReference type="SMR" id="A0JY70"/>
<dbReference type="STRING" id="290399.Arth_2611"/>
<dbReference type="KEGG" id="art:Arth_2611"/>
<dbReference type="eggNOG" id="COG0356">
    <property type="taxonomic scope" value="Bacteria"/>
</dbReference>
<dbReference type="HOGENOM" id="CLU_041018_0_1_11"/>
<dbReference type="OrthoDB" id="9809130at2"/>
<dbReference type="Proteomes" id="UP000000754">
    <property type="component" value="Chromosome"/>
</dbReference>
<dbReference type="GO" id="GO:0005886">
    <property type="term" value="C:plasma membrane"/>
    <property type="evidence" value="ECO:0007669"/>
    <property type="project" value="UniProtKB-SubCell"/>
</dbReference>
<dbReference type="GO" id="GO:0045259">
    <property type="term" value="C:proton-transporting ATP synthase complex"/>
    <property type="evidence" value="ECO:0007669"/>
    <property type="project" value="UniProtKB-KW"/>
</dbReference>
<dbReference type="GO" id="GO:0046933">
    <property type="term" value="F:proton-transporting ATP synthase activity, rotational mechanism"/>
    <property type="evidence" value="ECO:0007669"/>
    <property type="project" value="UniProtKB-UniRule"/>
</dbReference>
<dbReference type="CDD" id="cd00310">
    <property type="entry name" value="ATP-synt_Fo_a_6"/>
    <property type="match status" value="1"/>
</dbReference>
<dbReference type="Gene3D" id="1.20.120.220">
    <property type="entry name" value="ATP synthase, F0 complex, subunit A"/>
    <property type="match status" value="1"/>
</dbReference>
<dbReference type="HAMAP" id="MF_01393">
    <property type="entry name" value="ATP_synth_a_bact"/>
    <property type="match status" value="1"/>
</dbReference>
<dbReference type="InterPro" id="IPR000568">
    <property type="entry name" value="ATP_synth_F0_asu"/>
</dbReference>
<dbReference type="InterPro" id="IPR045083">
    <property type="entry name" value="ATP_synth_F0_asu_bact/mt"/>
</dbReference>
<dbReference type="InterPro" id="IPR035908">
    <property type="entry name" value="F0_ATP_A_sf"/>
</dbReference>
<dbReference type="NCBIfam" id="TIGR01131">
    <property type="entry name" value="ATP_synt_6_or_A"/>
    <property type="match status" value="1"/>
</dbReference>
<dbReference type="PANTHER" id="PTHR11410">
    <property type="entry name" value="ATP SYNTHASE SUBUNIT A"/>
    <property type="match status" value="1"/>
</dbReference>
<dbReference type="PANTHER" id="PTHR11410:SF0">
    <property type="entry name" value="ATP SYNTHASE SUBUNIT A"/>
    <property type="match status" value="1"/>
</dbReference>
<dbReference type="Pfam" id="PF00119">
    <property type="entry name" value="ATP-synt_A"/>
    <property type="match status" value="1"/>
</dbReference>
<dbReference type="PRINTS" id="PR00123">
    <property type="entry name" value="ATPASEA"/>
</dbReference>
<dbReference type="SUPFAM" id="SSF81336">
    <property type="entry name" value="F1F0 ATP synthase subunit A"/>
    <property type="match status" value="1"/>
</dbReference>
<organism>
    <name type="scientific">Arthrobacter sp. (strain FB24)</name>
    <dbReference type="NCBI Taxonomy" id="290399"/>
    <lineage>
        <taxon>Bacteria</taxon>
        <taxon>Bacillati</taxon>
        <taxon>Actinomycetota</taxon>
        <taxon>Actinomycetes</taxon>
        <taxon>Micrococcales</taxon>
        <taxon>Micrococcaceae</taxon>
        <taxon>Arthrobacter</taxon>
    </lineage>
</organism>
<sequence length="266" mass="28891">MIALALPAQDSGEFNPPGIEEMHLPAILPWGAADGFSKQMLLVILSVVIIATFFLLAARKQQLVPGKLQFAGEAAYGFVRNSIAKDIIGGKDFMKYVPLLFSLFFFILVNNIYGAIPLIQLPSFSHVGGAYVLAAIVYLTWIAIGVKKNGIKYFKLATVPTGVPVYILPIVIPIEIISNFLVRPVTHSLRLFATMLAGHLIVMIAGSGIEYLVMQENILLKGTSVLVLVGAIAMYMLEALIMALQAYVFTLLTAIYIEGALHADSH</sequence>
<keyword id="KW-0066">ATP synthesis</keyword>
<keyword id="KW-1003">Cell membrane</keyword>
<keyword id="KW-0138">CF(0)</keyword>
<keyword id="KW-0375">Hydrogen ion transport</keyword>
<keyword id="KW-0406">Ion transport</keyword>
<keyword id="KW-0472">Membrane</keyword>
<keyword id="KW-1185">Reference proteome</keyword>
<keyword id="KW-0812">Transmembrane</keyword>
<keyword id="KW-1133">Transmembrane helix</keyword>
<keyword id="KW-0813">Transport</keyword>
<proteinExistence type="inferred from homology"/>
<name>ATP6_ARTS2</name>
<evidence type="ECO:0000255" key="1">
    <source>
        <dbReference type="HAMAP-Rule" id="MF_01393"/>
    </source>
</evidence>
<feature type="chain" id="PRO_1000145256" description="ATP synthase subunit a">
    <location>
        <begin position="1"/>
        <end position="266"/>
    </location>
</feature>
<feature type="transmembrane region" description="Helical" evidence="1">
    <location>
        <begin position="38"/>
        <end position="58"/>
    </location>
</feature>
<feature type="transmembrane region" description="Helical" evidence="1">
    <location>
        <begin position="99"/>
        <end position="119"/>
    </location>
</feature>
<feature type="transmembrane region" description="Helical" evidence="1">
    <location>
        <begin position="126"/>
        <end position="146"/>
    </location>
</feature>
<feature type="transmembrane region" description="Helical" evidence="1">
    <location>
        <begin position="162"/>
        <end position="182"/>
    </location>
</feature>
<feature type="transmembrane region" description="Helical" evidence="1">
    <location>
        <begin position="191"/>
        <end position="211"/>
    </location>
</feature>
<feature type="transmembrane region" description="Helical" evidence="1">
    <location>
        <begin position="224"/>
        <end position="244"/>
    </location>
</feature>
<protein>
    <recommendedName>
        <fullName evidence="1">ATP synthase subunit a</fullName>
    </recommendedName>
    <alternativeName>
        <fullName evidence="1">ATP synthase F0 sector subunit a</fullName>
    </alternativeName>
    <alternativeName>
        <fullName evidence="1">F-ATPase subunit 6</fullName>
    </alternativeName>
</protein>
<comment type="function">
    <text evidence="1">Key component of the proton channel; it plays a direct role in the translocation of protons across the membrane.</text>
</comment>
<comment type="subunit">
    <text evidence="1">F-type ATPases have 2 components, CF(1) - the catalytic core - and CF(0) - the membrane proton channel. CF(1) has five subunits: alpha(3), beta(3), gamma(1), delta(1), epsilon(1). CF(0) has three main subunits: a(1), b(2) and c(9-12). The alpha and beta chains form an alternating ring which encloses part of the gamma chain. CF(1) is attached to CF(0) by a central stalk formed by the gamma and epsilon chains, while a peripheral stalk is formed by the delta and b chains.</text>
</comment>
<comment type="subcellular location">
    <subcellularLocation>
        <location evidence="1">Cell membrane</location>
        <topology evidence="1">Multi-pass membrane protein</topology>
    </subcellularLocation>
</comment>
<comment type="similarity">
    <text evidence="1">Belongs to the ATPase A chain family.</text>
</comment>
<reference key="1">
    <citation type="journal article" date="2013" name="Stand. Genomic Sci.">
        <title>Complete genome sequence of Arthrobacter sp. strain FB24.</title>
        <authorList>
            <person name="Nakatsu C.H."/>
            <person name="Barabote R."/>
            <person name="Thompson S."/>
            <person name="Bruce D."/>
            <person name="Detter C."/>
            <person name="Brettin T."/>
            <person name="Han C."/>
            <person name="Beasley F."/>
            <person name="Chen W."/>
            <person name="Konopka A."/>
            <person name="Xie G."/>
        </authorList>
    </citation>
    <scope>NUCLEOTIDE SEQUENCE [LARGE SCALE GENOMIC DNA]</scope>
    <source>
        <strain>FB24</strain>
    </source>
</reference>
<accession>A0JY70</accession>
<gene>
    <name evidence="1" type="primary">atpB</name>
    <name type="ordered locus">Arth_2611</name>
</gene>